<organism>
    <name type="scientific">Debaryomyces hansenii (strain ATCC 36239 / CBS 767 / BCRC 21394 / JCM 1990 / NBRC 0083 / IGC 2968)</name>
    <name type="common">Yeast</name>
    <name type="synonym">Torulaspora hansenii</name>
    <dbReference type="NCBI Taxonomy" id="284592"/>
    <lineage>
        <taxon>Eukaryota</taxon>
        <taxon>Fungi</taxon>
        <taxon>Dikarya</taxon>
        <taxon>Ascomycota</taxon>
        <taxon>Saccharomycotina</taxon>
        <taxon>Pichiomycetes</taxon>
        <taxon>Debaryomycetaceae</taxon>
        <taxon>Debaryomyces</taxon>
    </lineage>
</organism>
<reference key="1">
    <citation type="journal article" date="2004" name="Nature">
        <title>Genome evolution in yeasts.</title>
        <authorList>
            <person name="Dujon B."/>
            <person name="Sherman D."/>
            <person name="Fischer G."/>
            <person name="Durrens P."/>
            <person name="Casaregola S."/>
            <person name="Lafontaine I."/>
            <person name="de Montigny J."/>
            <person name="Marck C."/>
            <person name="Neuveglise C."/>
            <person name="Talla E."/>
            <person name="Goffard N."/>
            <person name="Frangeul L."/>
            <person name="Aigle M."/>
            <person name="Anthouard V."/>
            <person name="Babour A."/>
            <person name="Barbe V."/>
            <person name="Barnay S."/>
            <person name="Blanchin S."/>
            <person name="Beckerich J.-M."/>
            <person name="Beyne E."/>
            <person name="Bleykasten C."/>
            <person name="Boisrame A."/>
            <person name="Boyer J."/>
            <person name="Cattolico L."/>
            <person name="Confanioleri F."/>
            <person name="de Daruvar A."/>
            <person name="Despons L."/>
            <person name="Fabre E."/>
            <person name="Fairhead C."/>
            <person name="Ferry-Dumazet H."/>
            <person name="Groppi A."/>
            <person name="Hantraye F."/>
            <person name="Hennequin C."/>
            <person name="Jauniaux N."/>
            <person name="Joyet P."/>
            <person name="Kachouri R."/>
            <person name="Kerrest A."/>
            <person name="Koszul R."/>
            <person name="Lemaire M."/>
            <person name="Lesur I."/>
            <person name="Ma L."/>
            <person name="Muller H."/>
            <person name="Nicaud J.-M."/>
            <person name="Nikolski M."/>
            <person name="Oztas S."/>
            <person name="Ozier-Kalogeropoulos O."/>
            <person name="Pellenz S."/>
            <person name="Potier S."/>
            <person name="Richard G.-F."/>
            <person name="Straub M.-L."/>
            <person name="Suleau A."/>
            <person name="Swennen D."/>
            <person name="Tekaia F."/>
            <person name="Wesolowski-Louvel M."/>
            <person name="Westhof E."/>
            <person name="Wirth B."/>
            <person name="Zeniou-Meyer M."/>
            <person name="Zivanovic Y."/>
            <person name="Bolotin-Fukuhara M."/>
            <person name="Thierry A."/>
            <person name="Bouchier C."/>
            <person name="Caudron B."/>
            <person name="Scarpelli C."/>
            <person name="Gaillardin C."/>
            <person name="Weissenbach J."/>
            <person name="Wincker P."/>
            <person name="Souciet J.-L."/>
        </authorList>
    </citation>
    <scope>NUCLEOTIDE SEQUENCE [LARGE SCALE GENOMIC DNA]</scope>
    <source>
        <strain>ATCC 36239 / CBS 767 / BCRC 21394 / JCM 1990 / NBRC 0083 / IGC 2968</strain>
    </source>
</reference>
<protein>
    <recommendedName>
        <fullName evidence="2">Large ribosomal subunit protein eL24</fullName>
    </recommendedName>
    <alternativeName>
        <fullName>60S ribosomal protein L24</fullName>
    </alternativeName>
</protein>
<name>RL24_DEBHA</name>
<evidence type="ECO:0000256" key="1">
    <source>
        <dbReference type="SAM" id="MobiDB-lite"/>
    </source>
</evidence>
<evidence type="ECO:0000305" key="2"/>
<keyword id="KW-1185">Reference proteome</keyword>
<keyword id="KW-0687">Ribonucleoprotein</keyword>
<keyword id="KW-0689">Ribosomal protein</keyword>
<feature type="chain" id="PRO_0000136887" description="Large ribosomal subunit protein eL24">
    <location>
        <begin position="1"/>
        <end position="156"/>
    </location>
</feature>
<feature type="region of interest" description="Disordered" evidence="1">
    <location>
        <begin position="87"/>
        <end position="156"/>
    </location>
</feature>
<feature type="compositionally biased region" description="Basic and acidic residues" evidence="1">
    <location>
        <begin position="89"/>
        <end position="129"/>
    </location>
</feature>
<feature type="compositionally biased region" description="Low complexity" evidence="1">
    <location>
        <begin position="130"/>
        <end position="147"/>
    </location>
</feature>
<dbReference type="EMBL" id="CR382137">
    <property type="protein sequence ID" value="CAG88582.1"/>
    <property type="molecule type" value="Genomic_DNA"/>
</dbReference>
<dbReference type="RefSeq" id="XP_460298.1">
    <property type="nucleotide sequence ID" value="XM_460298.1"/>
</dbReference>
<dbReference type="SMR" id="Q6BNC2"/>
<dbReference type="FunCoup" id="Q6BNC2">
    <property type="interactions" value="937"/>
</dbReference>
<dbReference type="STRING" id="284592.Q6BNC2"/>
<dbReference type="GeneID" id="2902361"/>
<dbReference type="KEGG" id="dha:DEHA2E22968g"/>
<dbReference type="VEuPathDB" id="FungiDB:DEHA2E22968g"/>
<dbReference type="eggNOG" id="KOG1722">
    <property type="taxonomic scope" value="Eukaryota"/>
</dbReference>
<dbReference type="HOGENOM" id="CLU_106411_0_0_1"/>
<dbReference type="InParanoid" id="Q6BNC2"/>
<dbReference type="OMA" id="PGHGKKM"/>
<dbReference type="OrthoDB" id="1727108at2759"/>
<dbReference type="Proteomes" id="UP000000599">
    <property type="component" value="Chromosome E"/>
</dbReference>
<dbReference type="GO" id="GO:0022625">
    <property type="term" value="C:cytosolic large ribosomal subunit"/>
    <property type="evidence" value="ECO:0007669"/>
    <property type="project" value="TreeGrafter"/>
</dbReference>
<dbReference type="GO" id="GO:0003729">
    <property type="term" value="F:mRNA binding"/>
    <property type="evidence" value="ECO:0007669"/>
    <property type="project" value="TreeGrafter"/>
</dbReference>
<dbReference type="GO" id="GO:0003735">
    <property type="term" value="F:structural constituent of ribosome"/>
    <property type="evidence" value="ECO:0007669"/>
    <property type="project" value="InterPro"/>
</dbReference>
<dbReference type="GO" id="GO:0002181">
    <property type="term" value="P:cytoplasmic translation"/>
    <property type="evidence" value="ECO:0007669"/>
    <property type="project" value="TreeGrafter"/>
</dbReference>
<dbReference type="CDD" id="cd00472">
    <property type="entry name" value="Ribosomal_L24e_L24"/>
    <property type="match status" value="1"/>
</dbReference>
<dbReference type="FunFam" id="2.30.170.20:FF:000002">
    <property type="entry name" value="60S ribosomal protein L24"/>
    <property type="match status" value="1"/>
</dbReference>
<dbReference type="Gene3D" id="6.10.250.1270">
    <property type="match status" value="1"/>
</dbReference>
<dbReference type="Gene3D" id="2.30.170.20">
    <property type="entry name" value="Ribosomal protein L24e"/>
    <property type="match status" value="1"/>
</dbReference>
<dbReference type="InterPro" id="IPR038630">
    <property type="entry name" value="L24e/L24_sf"/>
</dbReference>
<dbReference type="InterPro" id="IPR056366">
    <property type="entry name" value="Ribosomal_eL24"/>
</dbReference>
<dbReference type="InterPro" id="IPR000988">
    <property type="entry name" value="Ribosomal_eL24-rel_N"/>
</dbReference>
<dbReference type="InterPro" id="IPR023442">
    <property type="entry name" value="Ribosomal_eL24_CS"/>
</dbReference>
<dbReference type="PANTHER" id="PTHR10792">
    <property type="entry name" value="60S RIBOSOMAL PROTEIN L24"/>
    <property type="match status" value="1"/>
</dbReference>
<dbReference type="PANTHER" id="PTHR10792:SF1">
    <property type="entry name" value="RIBOSOMAL PROTEIN L24"/>
    <property type="match status" value="1"/>
</dbReference>
<dbReference type="Pfam" id="PF01246">
    <property type="entry name" value="Ribosomal_L24e"/>
    <property type="match status" value="1"/>
</dbReference>
<dbReference type="SUPFAM" id="SSF57716">
    <property type="entry name" value="Glucocorticoid receptor-like (DNA-binding domain)"/>
    <property type="match status" value="1"/>
</dbReference>
<dbReference type="PROSITE" id="PS01073">
    <property type="entry name" value="RIBOSOMAL_L24E"/>
    <property type="match status" value="1"/>
</dbReference>
<accession>Q6BNC2</accession>
<sequence length="156" mass="17612">MKVELDSFSGTKIYPGRGTLFVRGDSKIFRFQSSKSASLFHQRKNPRRISWTVLYRRQHKKGISEESAKRRTRKTVKNQRAIVGASLELIKERRSQKPSDRKAARDVKLAKDKEAKKADKAARKAEKAKSAAAGAQSKVSKQQSKGAFQKVHATSR</sequence>
<proteinExistence type="inferred from homology"/>
<gene>
    <name type="primary">RPL24</name>
    <name type="ordered locus">DEHA2E22968g</name>
</gene>
<comment type="similarity">
    <text evidence="2">Belongs to the eukaryotic ribosomal protein eL24 family.</text>
</comment>